<proteinExistence type="inferred from homology"/>
<keyword id="KW-0227">DNA damage</keyword>
<keyword id="KW-0234">DNA repair</keyword>
<accession>A8F0A4</accession>
<sequence length="610" mass="69138">MTIKFLSESTINRIAAGEVIERPASVVKELVENAVDASSTKINIILERAGKNLIIISDDGIGMTDKELEIAVERHTTSKLDESDFLKIHTFGFRGEALPSIAAISKMLITSKKRGTDKAFQIKLIGGNEKQITISVHNEGTKIEIRDLFFATPARLKFLRADKTELAVTVDIVKKIALAHPEISFSLTNDSKNLLKLKGQNKDAETNLKQRIIDVIGDDFIKNAAYIDFKILDFSICGYTSIPTYNRASSEDQFLFINNRPVKDKLLQVALRVAYQDYLARDRYPLCAIFLQIDPQFVDVNVHPAKAEVRFHDPNYVRNLLIEAIKNALANKSHVTSTTIASDTLKLFKNPLINKQPTINKEVNVNSKSVDYRSYSSANTPKILQNHICQKLIDTLPHAKVEQEVENRIEHKQQIHKQYKLGAAKAQLHTTYIISQTEDSIVITDQHAAHERLGYEKIKSYIKMDELIKQRLLIPEIVELPNEKRADCLYDHREKLSKLGLTLEKFGEKSIIVTEIPNILGDVNVQKLIQDLADHLSDFSENVALMELIEHVTETYACHYSIRAGRKLSADEMNALLRQMENTPFSGQCNHGRPTYIELKLKDIERLFGR</sequence>
<evidence type="ECO:0000255" key="1">
    <source>
        <dbReference type="HAMAP-Rule" id="MF_00149"/>
    </source>
</evidence>
<dbReference type="EMBL" id="CP000409">
    <property type="protein sequence ID" value="ABV74037.1"/>
    <property type="molecule type" value="Genomic_DNA"/>
</dbReference>
<dbReference type="RefSeq" id="WP_012149231.1">
    <property type="nucleotide sequence ID" value="NC_009879.1"/>
</dbReference>
<dbReference type="SMR" id="A8F0A4"/>
<dbReference type="STRING" id="293613.A1E_05630"/>
<dbReference type="KEGG" id="rcm:A1E_05630"/>
<dbReference type="eggNOG" id="COG0323">
    <property type="taxonomic scope" value="Bacteria"/>
</dbReference>
<dbReference type="HOGENOM" id="CLU_004131_4_2_5"/>
<dbReference type="Proteomes" id="UP000007056">
    <property type="component" value="Chromosome"/>
</dbReference>
<dbReference type="GO" id="GO:0032300">
    <property type="term" value="C:mismatch repair complex"/>
    <property type="evidence" value="ECO:0007669"/>
    <property type="project" value="InterPro"/>
</dbReference>
<dbReference type="GO" id="GO:0005524">
    <property type="term" value="F:ATP binding"/>
    <property type="evidence" value="ECO:0007669"/>
    <property type="project" value="InterPro"/>
</dbReference>
<dbReference type="GO" id="GO:0016887">
    <property type="term" value="F:ATP hydrolysis activity"/>
    <property type="evidence" value="ECO:0007669"/>
    <property type="project" value="InterPro"/>
</dbReference>
<dbReference type="GO" id="GO:0140664">
    <property type="term" value="F:ATP-dependent DNA damage sensor activity"/>
    <property type="evidence" value="ECO:0007669"/>
    <property type="project" value="InterPro"/>
</dbReference>
<dbReference type="GO" id="GO:0030983">
    <property type="term" value="F:mismatched DNA binding"/>
    <property type="evidence" value="ECO:0007669"/>
    <property type="project" value="InterPro"/>
</dbReference>
<dbReference type="GO" id="GO:0006298">
    <property type="term" value="P:mismatch repair"/>
    <property type="evidence" value="ECO:0007669"/>
    <property type="project" value="UniProtKB-UniRule"/>
</dbReference>
<dbReference type="CDD" id="cd16926">
    <property type="entry name" value="HATPase_MutL-MLH-PMS-like"/>
    <property type="match status" value="1"/>
</dbReference>
<dbReference type="CDD" id="cd00782">
    <property type="entry name" value="MutL_Trans"/>
    <property type="match status" value="1"/>
</dbReference>
<dbReference type="FunFam" id="3.30.565.10:FF:000003">
    <property type="entry name" value="DNA mismatch repair endonuclease MutL"/>
    <property type="match status" value="1"/>
</dbReference>
<dbReference type="Gene3D" id="3.30.230.10">
    <property type="match status" value="1"/>
</dbReference>
<dbReference type="Gene3D" id="3.30.565.10">
    <property type="entry name" value="Histidine kinase-like ATPase, C-terminal domain"/>
    <property type="match status" value="1"/>
</dbReference>
<dbReference type="Gene3D" id="3.30.1540.20">
    <property type="entry name" value="MutL, C-terminal domain, dimerisation subdomain"/>
    <property type="match status" value="1"/>
</dbReference>
<dbReference type="Gene3D" id="3.30.1370.100">
    <property type="entry name" value="MutL, C-terminal domain, regulatory subdomain"/>
    <property type="match status" value="1"/>
</dbReference>
<dbReference type="HAMAP" id="MF_00149">
    <property type="entry name" value="DNA_mis_repair"/>
    <property type="match status" value="1"/>
</dbReference>
<dbReference type="InterPro" id="IPR014762">
    <property type="entry name" value="DNA_mismatch_repair_CS"/>
</dbReference>
<dbReference type="InterPro" id="IPR020667">
    <property type="entry name" value="DNA_mismatch_repair_MutL"/>
</dbReference>
<dbReference type="InterPro" id="IPR013507">
    <property type="entry name" value="DNA_mismatch_S5_2-like"/>
</dbReference>
<dbReference type="InterPro" id="IPR036890">
    <property type="entry name" value="HATPase_C_sf"/>
</dbReference>
<dbReference type="InterPro" id="IPR002099">
    <property type="entry name" value="MutL/Mlh/PMS"/>
</dbReference>
<dbReference type="InterPro" id="IPR038973">
    <property type="entry name" value="MutL/Mlh/Pms-like"/>
</dbReference>
<dbReference type="InterPro" id="IPR014790">
    <property type="entry name" value="MutL_C"/>
</dbReference>
<dbReference type="InterPro" id="IPR042120">
    <property type="entry name" value="MutL_C_dimsub"/>
</dbReference>
<dbReference type="InterPro" id="IPR042121">
    <property type="entry name" value="MutL_C_regsub"/>
</dbReference>
<dbReference type="InterPro" id="IPR037198">
    <property type="entry name" value="MutL_C_sf"/>
</dbReference>
<dbReference type="InterPro" id="IPR020568">
    <property type="entry name" value="Ribosomal_Su5_D2-typ_SF"/>
</dbReference>
<dbReference type="InterPro" id="IPR014721">
    <property type="entry name" value="Ribsml_uS5_D2-typ_fold_subgr"/>
</dbReference>
<dbReference type="NCBIfam" id="TIGR00585">
    <property type="entry name" value="mutl"/>
    <property type="match status" value="1"/>
</dbReference>
<dbReference type="NCBIfam" id="NF000952">
    <property type="entry name" value="PRK00095.2-2"/>
    <property type="match status" value="1"/>
</dbReference>
<dbReference type="NCBIfam" id="NF000953">
    <property type="entry name" value="PRK00095.2-4"/>
    <property type="match status" value="1"/>
</dbReference>
<dbReference type="PANTHER" id="PTHR10073">
    <property type="entry name" value="DNA MISMATCH REPAIR PROTEIN MLH, PMS, MUTL"/>
    <property type="match status" value="1"/>
</dbReference>
<dbReference type="PANTHER" id="PTHR10073:SF12">
    <property type="entry name" value="DNA MISMATCH REPAIR PROTEIN MLH1"/>
    <property type="match status" value="1"/>
</dbReference>
<dbReference type="Pfam" id="PF01119">
    <property type="entry name" value="DNA_mis_repair"/>
    <property type="match status" value="1"/>
</dbReference>
<dbReference type="Pfam" id="PF13589">
    <property type="entry name" value="HATPase_c_3"/>
    <property type="match status" value="1"/>
</dbReference>
<dbReference type="Pfam" id="PF08676">
    <property type="entry name" value="MutL_C"/>
    <property type="match status" value="1"/>
</dbReference>
<dbReference type="SMART" id="SM01340">
    <property type="entry name" value="DNA_mis_repair"/>
    <property type="match status" value="1"/>
</dbReference>
<dbReference type="SMART" id="SM00853">
    <property type="entry name" value="MutL_C"/>
    <property type="match status" value="1"/>
</dbReference>
<dbReference type="SUPFAM" id="SSF55874">
    <property type="entry name" value="ATPase domain of HSP90 chaperone/DNA topoisomerase II/histidine kinase"/>
    <property type="match status" value="1"/>
</dbReference>
<dbReference type="SUPFAM" id="SSF118116">
    <property type="entry name" value="DNA mismatch repair protein MutL"/>
    <property type="match status" value="1"/>
</dbReference>
<dbReference type="SUPFAM" id="SSF54211">
    <property type="entry name" value="Ribosomal protein S5 domain 2-like"/>
    <property type="match status" value="1"/>
</dbReference>
<dbReference type="PROSITE" id="PS00058">
    <property type="entry name" value="DNA_MISMATCH_REPAIR_1"/>
    <property type="match status" value="1"/>
</dbReference>
<feature type="chain" id="PRO_1000010070" description="DNA mismatch repair protein MutL">
    <location>
        <begin position="1"/>
        <end position="610"/>
    </location>
</feature>
<name>MUTL_RICCK</name>
<protein>
    <recommendedName>
        <fullName evidence="1">DNA mismatch repair protein MutL</fullName>
    </recommendedName>
</protein>
<comment type="function">
    <text evidence="1">This protein is involved in the repair of mismatches in DNA. It is required for dam-dependent methyl-directed DNA mismatch repair. May act as a 'molecular matchmaker', a protein that promotes the formation of a stable complex between two or more DNA-binding proteins in an ATP-dependent manner without itself being part of a final effector complex.</text>
</comment>
<comment type="similarity">
    <text evidence="1">Belongs to the DNA mismatch repair MutL/HexB family.</text>
</comment>
<gene>
    <name evidence="1" type="primary">mutL</name>
    <name type="ordered locus">A1E_05630</name>
</gene>
<organism>
    <name type="scientific">Rickettsia canadensis (strain McKiel)</name>
    <dbReference type="NCBI Taxonomy" id="293613"/>
    <lineage>
        <taxon>Bacteria</taxon>
        <taxon>Pseudomonadati</taxon>
        <taxon>Pseudomonadota</taxon>
        <taxon>Alphaproteobacteria</taxon>
        <taxon>Rickettsiales</taxon>
        <taxon>Rickettsiaceae</taxon>
        <taxon>Rickettsieae</taxon>
        <taxon>Rickettsia</taxon>
        <taxon>belli group</taxon>
    </lineage>
</organism>
<reference key="1">
    <citation type="submission" date="2007-09" db="EMBL/GenBank/DDBJ databases">
        <title>Complete genome sequence of Rickettsia canadensis.</title>
        <authorList>
            <person name="Madan A."/>
            <person name="Fahey J."/>
            <person name="Helton E."/>
            <person name="Ketteman M."/>
            <person name="Madan A."/>
            <person name="Rodrigues S."/>
            <person name="Sanchez A."/>
            <person name="Whiting M."/>
            <person name="Dasch G."/>
            <person name="Eremeeva M."/>
        </authorList>
    </citation>
    <scope>NUCLEOTIDE SEQUENCE [LARGE SCALE GENOMIC DNA]</scope>
    <source>
        <strain>McKiel</strain>
    </source>
</reference>